<evidence type="ECO:0000255" key="1">
    <source>
        <dbReference type="HAMAP-Rule" id="MF_01253"/>
    </source>
</evidence>
<name>END8_SHIF8</name>
<comment type="function">
    <text evidence="1">Involved in base excision repair of DNA damaged by oxidation or by mutagenic agents. Acts as a DNA glycosylase that recognizes and removes damaged bases. Has a preference for oxidized pyrimidines, such as thymine glycol, 5,6-dihydrouracil and 5,6-dihydrothymine. Has AP (apurinic/apyrimidinic) lyase activity and introduces nicks in the DNA strand. Cleaves the DNA backbone by beta-delta elimination to generate a single-strand break at the site of the removed base with both 3'- and 5'-phosphates.</text>
</comment>
<comment type="catalytic activity">
    <reaction evidence="1">
        <text>2'-deoxyribonucleotide-(2'-deoxyribose 5'-phosphate)-2'-deoxyribonucleotide-DNA = a 3'-end 2'-deoxyribonucleotide-(2,3-dehydro-2,3-deoxyribose 5'-phosphate)-DNA + a 5'-end 5'-phospho-2'-deoxyribonucleoside-DNA + H(+)</text>
        <dbReference type="Rhea" id="RHEA:66592"/>
        <dbReference type="Rhea" id="RHEA-COMP:13180"/>
        <dbReference type="Rhea" id="RHEA-COMP:16897"/>
        <dbReference type="Rhea" id="RHEA-COMP:17067"/>
        <dbReference type="ChEBI" id="CHEBI:15378"/>
        <dbReference type="ChEBI" id="CHEBI:136412"/>
        <dbReference type="ChEBI" id="CHEBI:157695"/>
        <dbReference type="ChEBI" id="CHEBI:167181"/>
        <dbReference type="EC" id="4.2.99.18"/>
    </reaction>
</comment>
<comment type="cofactor">
    <cofactor evidence="1">
        <name>Zn(2+)</name>
        <dbReference type="ChEBI" id="CHEBI:29105"/>
    </cofactor>
    <text evidence="1">Binds 1 zinc ion per subunit.</text>
</comment>
<comment type="similarity">
    <text evidence="1">Belongs to the FPG family.</text>
</comment>
<gene>
    <name evidence="1" type="primary">nei</name>
    <name type="ordered locus">SFV_0621</name>
</gene>
<sequence length="263" mass="29842">MPEGPEIRRAADNLEAAIKGKPLTDVWFAFPQLKTYQSQLIGQHVTHVETRGKALLTHFPNGLTLYSHNQLYGVWRVVDTGEEPQTTRVLRVKLQTADKTILLYSASDIEMLRPEQLTTHPFLQRVGPDVLDPNLTPEVVKERLLSPRFRNRQFAGLLLDQAFLAGLGNYLRVEILWQVGLTGNHKAKDLNAAQLDALAHALLEIPRFSYATRGQVDENKHHGALFRFKVFHRDGELCERCGGIIEKTTLSSRPFYWCPGCQH</sequence>
<reference key="1">
    <citation type="journal article" date="2006" name="BMC Genomics">
        <title>Complete genome sequence of Shigella flexneri 5b and comparison with Shigella flexneri 2a.</title>
        <authorList>
            <person name="Nie H."/>
            <person name="Yang F."/>
            <person name="Zhang X."/>
            <person name="Yang J."/>
            <person name="Chen L."/>
            <person name="Wang J."/>
            <person name="Xiong Z."/>
            <person name="Peng J."/>
            <person name="Sun L."/>
            <person name="Dong J."/>
            <person name="Xue Y."/>
            <person name="Xu X."/>
            <person name="Chen S."/>
            <person name="Yao Z."/>
            <person name="Shen Y."/>
            <person name="Jin Q."/>
        </authorList>
    </citation>
    <scope>NUCLEOTIDE SEQUENCE [LARGE SCALE GENOMIC DNA]</scope>
    <source>
        <strain>8401</strain>
    </source>
</reference>
<dbReference type="EC" id="3.2.2.-" evidence="1"/>
<dbReference type="EC" id="4.2.99.18" evidence="1"/>
<dbReference type="EMBL" id="CP000266">
    <property type="protein sequence ID" value="ABF02872.1"/>
    <property type="molecule type" value="Genomic_DNA"/>
</dbReference>
<dbReference type="RefSeq" id="WP_001114016.1">
    <property type="nucleotide sequence ID" value="NC_008258.1"/>
</dbReference>
<dbReference type="SMR" id="Q0T6V4"/>
<dbReference type="KEGG" id="sfv:SFV_0621"/>
<dbReference type="HOGENOM" id="CLU_038423_2_2_6"/>
<dbReference type="Proteomes" id="UP000000659">
    <property type="component" value="Chromosome"/>
</dbReference>
<dbReference type="GO" id="GO:0140078">
    <property type="term" value="F:class I DNA-(apurinic or apyrimidinic site) endonuclease activity"/>
    <property type="evidence" value="ECO:0007669"/>
    <property type="project" value="UniProtKB-EC"/>
</dbReference>
<dbReference type="GO" id="GO:0003684">
    <property type="term" value="F:damaged DNA binding"/>
    <property type="evidence" value="ECO:0007669"/>
    <property type="project" value="InterPro"/>
</dbReference>
<dbReference type="GO" id="GO:0000703">
    <property type="term" value="F:oxidized pyrimidine nucleobase lesion DNA N-glycosylase activity"/>
    <property type="evidence" value="ECO:0007669"/>
    <property type="project" value="UniProtKB-UniRule"/>
</dbReference>
<dbReference type="GO" id="GO:0008270">
    <property type="term" value="F:zinc ion binding"/>
    <property type="evidence" value="ECO:0007669"/>
    <property type="project" value="UniProtKB-UniRule"/>
</dbReference>
<dbReference type="GO" id="GO:0006284">
    <property type="term" value="P:base-excision repair"/>
    <property type="evidence" value="ECO:0007669"/>
    <property type="project" value="InterPro"/>
</dbReference>
<dbReference type="CDD" id="cd08965">
    <property type="entry name" value="EcNei-like_N"/>
    <property type="match status" value="1"/>
</dbReference>
<dbReference type="FunFam" id="1.10.8.50:FF:000005">
    <property type="entry name" value="Endonuclease 8"/>
    <property type="match status" value="1"/>
</dbReference>
<dbReference type="FunFam" id="3.20.190.10:FF:000002">
    <property type="entry name" value="Endonuclease 8"/>
    <property type="match status" value="1"/>
</dbReference>
<dbReference type="Gene3D" id="1.10.8.50">
    <property type="match status" value="1"/>
</dbReference>
<dbReference type="Gene3D" id="3.20.190.10">
    <property type="entry name" value="MutM-like, N-terminal"/>
    <property type="match status" value="1"/>
</dbReference>
<dbReference type="HAMAP" id="MF_01253">
    <property type="entry name" value="Endonuclease_8"/>
    <property type="match status" value="1"/>
</dbReference>
<dbReference type="InterPro" id="IPR015886">
    <property type="entry name" value="DNA_glyclase/AP_lyase_DNA-bd"/>
</dbReference>
<dbReference type="InterPro" id="IPR015887">
    <property type="entry name" value="DNA_glyclase_Znf_dom_DNA_BS"/>
</dbReference>
<dbReference type="InterPro" id="IPR044091">
    <property type="entry name" value="EcNei-like_N"/>
</dbReference>
<dbReference type="InterPro" id="IPR023713">
    <property type="entry name" value="Endonuclease-VIII"/>
</dbReference>
<dbReference type="InterPro" id="IPR012319">
    <property type="entry name" value="FPG_cat"/>
</dbReference>
<dbReference type="InterPro" id="IPR035937">
    <property type="entry name" value="MutM-like_N-ter"/>
</dbReference>
<dbReference type="InterPro" id="IPR010979">
    <property type="entry name" value="Ribosomal_uS13-like_H2TH"/>
</dbReference>
<dbReference type="InterPro" id="IPR000214">
    <property type="entry name" value="Znf_DNA_glyclase/AP_lyase"/>
</dbReference>
<dbReference type="InterPro" id="IPR010663">
    <property type="entry name" value="Znf_FPG/IleRS"/>
</dbReference>
<dbReference type="NCBIfam" id="NF007763">
    <property type="entry name" value="PRK10445.1"/>
    <property type="match status" value="1"/>
</dbReference>
<dbReference type="PANTHER" id="PTHR42697">
    <property type="entry name" value="ENDONUCLEASE 8"/>
    <property type="match status" value="1"/>
</dbReference>
<dbReference type="PANTHER" id="PTHR42697:SF1">
    <property type="entry name" value="ENDONUCLEASE 8"/>
    <property type="match status" value="1"/>
</dbReference>
<dbReference type="Pfam" id="PF01149">
    <property type="entry name" value="Fapy_DNA_glyco"/>
    <property type="match status" value="1"/>
</dbReference>
<dbReference type="Pfam" id="PF06831">
    <property type="entry name" value="H2TH"/>
    <property type="match status" value="1"/>
</dbReference>
<dbReference type="Pfam" id="PF06827">
    <property type="entry name" value="zf-FPG_IleRS"/>
    <property type="match status" value="1"/>
</dbReference>
<dbReference type="SMART" id="SM00898">
    <property type="entry name" value="Fapy_DNA_glyco"/>
    <property type="match status" value="1"/>
</dbReference>
<dbReference type="SMART" id="SM01232">
    <property type="entry name" value="H2TH"/>
    <property type="match status" value="1"/>
</dbReference>
<dbReference type="SUPFAM" id="SSF57716">
    <property type="entry name" value="Glucocorticoid receptor-like (DNA-binding domain)"/>
    <property type="match status" value="1"/>
</dbReference>
<dbReference type="SUPFAM" id="SSF81624">
    <property type="entry name" value="N-terminal domain of MutM-like DNA repair proteins"/>
    <property type="match status" value="1"/>
</dbReference>
<dbReference type="SUPFAM" id="SSF46946">
    <property type="entry name" value="S13-like H2TH domain"/>
    <property type="match status" value="1"/>
</dbReference>
<dbReference type="PROSITE" id="PS51068">
    <property type="entry name" value="FPG_CAT"/>
    <property type="match status" value="1"/>
</dbReference>
<dbReference type="PROSITE" id="PS01242">
    <property type="entry name" value="ZF_FPG_1"/>
    <property type="match status" value="1"/>
</dbReference>
<dbReference type="PROSITE" id="PS51066">
    <property type="entry name" value="ZF_FPG_2"/>
    <property type="match status" value="1"/>
</dbReference>
<accession>Q0T6V4</accession>
<keyword id="KW-0227">DNA damage</keyword>
<keyword id="KW-0234">DNA repair</keyword>
<keyword id="KW-0238">DNA-binding</keyword>
<keyword id="KW-0326">Glycosidase</keyword>
<keyword id="KW-0378">Hydrolase</keyword>
<keyword id="KW-0456">Lyase</keyword>
<keyword id="KW-0479">Metal-binding</keyword>
<keyword id="KW-0511">Multifunctional enzyme</keyword>
<keyword id="KW-0862">Zinc</keyword>
<keyword id="KW-0863">Zinc-finger</keyword>
<organism>
    <name type="scientific">Shigella flexneri serotype 5b (strain 8401)</name>
    <dbReference type="NCBI Taxonomy" id="373384"/>
    <lineage>
        <taxon>Bacteria</taxon>
        <taxon>Pseudomonadati</taxon>
        <taxon>Pseudomonadota</taxon>
        <taxon>Gammaproteobacteria</taxon>
        <taxon>Enterobacterales</taxon>
        <taxon>Enterobacteriaceae</taxon>
        <taxon>Shigella</taxon>
    </lineage>
</organism>
<protein>
    <recommendedName>
        <fullName evidence="1">Endonuclease 8</fullName>
    </recommendedName>
    <alternativeName>
        <fullName evidence="1">DNA glycosylase/AP lyase Nei</fullName>
        <ecNumber evidence="1">3.2.2.-</ecNumber>
        <ecNumber evidence="1">4.2.99.18</ecNumber>
    </alternativeName>
    <alternativeName>
        <fullName evidence="1">DNA-(apurinic or apyrimidinic site) lyase Nei</fullName>
    </alternativeName>
    <alternativeName>
        <fullName evidence="1">Endonuclease VIII</fullName>
    </alternativeName>
</protein>
<feature type="initiator methionine" description="Removed" evidence="1">
    <location>
        <position position="1"/>
    </location>
</feature>
<feature type="chain" id="PRO_1000067211" description="Endonuclease 8">
    <location>
        <begin position="2"/>
        <end position="263"/>
    </location>
</feature>
<feature type="zinc finger region" description="FPG-type" evidence="1">
    <location>
        <begin position="229"/>
        <end position="263"/>
    </location>
</feature>
<feature type="active site" description="Schiff-base intermediate with DNA" evidence="1">
    <location>
        <position position="2"/>
    </location>
</feature>
<feature type="active site" description="Proton donor" evidence="1">
    <location>
        <position position="3"/>
    </location>
</feature>
<feature type="active site" description="Proton donor; for beta-elimination activity" evidence="1">
    <location>
        <position position="53"/>
    </location>
</feature>
<feature type="active site" description="Proton donor; for delta-elimination activity" evidence="1">
    <location>
        <position position="253"/>
    </location>
</feature>
<feature type="binding site" evidence="1">
    <location>
        <position position="70"/>
    </location>
    <ligand>
        <name>DNA</name>
        <dbReference type="ChEBI" id="CHEBI:16991"/>
    </ligand>
</feature>
<feature type="binding site" evidence="1">
    <location>
        <position position="125"/>
    </location>
    <ligand>
        <name>DNA</name>
        <dbReference type="ChEBI" id="CHEBI:16991"/>
    </ligand>
</feature>
<feature type="binding site" evidence="1">
    <location>
        <position position="169"/>
    </location>
    <ligand>
        <name>DNA</name>
        <dbReference type="ChEBI" id="CHEBI:16991"/>
    </ligand>
</feature>
<proteinExistence type="inferred from homology"/>